<comment type="function">
    <text evidence="1 5">Growth factor that plays an essential role in the regulation of embryonic development, cell proliferation, cell migration, survival and chemotaxis. Potent mitogen and chemoattractant for cells of mesenchymal origin. Required for normal skeleton formation during embryonic development. Required for normal skin morphogenesis during embryonic development. Plays an important role in wound healing, in angiogenesis and blood vessel development (By similarity).</text>
</comment>
<comment type="subunit">
    <text evidence="1">Homodimer; disulfide-linked. Interacts with PDGFRA homodimers, and with heterodimers formed by PDGFRA and PDGFRB (By similarity).</text>
</comment>
<comment type="subcellular location">
    <subcellularLocation>
        <location evidence="2">Secreted</location>
    </subcellularLocation>
</comment>
<comment type="developmental stage">
    <text evidence="5">Expression increases in the spinal cord from 4 dpc to 16 dpc, with the highest level detected between 12 dpc and 16 dpc. Expression rapidly decreases after hatching.</text>
</comment>
<comment type="PTM">
    <text evidence="1">Proteolytic removal of the N-terminal CUB domain releasing the core domain is necessary for unmasking the receptor-binding epitopes of the core domain. Cleavage after basic residues in the hinge region (region connecting the CUB and growth factor domains) gives rise to the receptor-binding form (By similarity).</text>
</comment>
<comment type="similarity">
    <text evidence="6">Belongs to the PDGF/VEGF growth factor family.</text>
</comment>
<proteinExistence type="evidence at transcript level"/>
<dbReference type="EMBL" id="AB033829">
    <property type="protein sequence ID" value="BAB03265.1"/>
    <property type="molecule type" value="mRNA"/>
</dbReference>
<dbReference type="RefSeq" id="NP_990052.1">
    <property type="nucleotide sequence ID" value="NM_204721.3"/>
</dbReference>
<dbReference type="SMR" id="Q9I946"/>
<dbReference type="FunCoup" id="Q9I946">
    <property type="interactions" value="480"/>
</dbReference>
<dbReference type="STRING" id="9031.ENSGALP00000015259"/>
<dbReference type="GlyCosmos" id="Q9I946">
    <property type="glycosylation" value="1 site, No reported glycans"/>
</dbReference>
<dbReference type="GlyGen" id="Q9I946">
    <property type="glycosylation" value="1 site"/>
</dbReference>
<dbReference type="PaxDb" id="9031-ENSGALP00000015259"/>
<dbReference type="Ensembl" id="ENSGALT00010019578.1">
    <property type="protein sequence ID" value="ENSGALP00010011126.1"/>
    <property type="gene ID" value="ENSGALG00010008185.1"/>
</dbReference>
<dbReference type="GeneID" id="395469"/>
<dbReference type="KEGG" id="gga:395469"/>
<dbReference type="CTD" id="56034"/>
<dbReference type="VEuPathDB" id="HostDB:geneid_395469"/>
<dbReference type="eggNOG" id="ENOG502QUUR">
    <property type="taxonomic scope" value="Eukaryota"/>
</dbReference>
<dbReference type="GeneTree" id="ENSGT00940000158645"/>
<dbReference type="HOGENOM" id="CLU_037859_0_0_1"/>
<dbReference type="InParanoid" id="Q9I946"/>
<dbReference type="OMA" id="MLIQLTF"/>
<dbReference type="OrthoDB" id="8641091at2759"/>
<dbReference type="PhylomeDB" id="Q9I946"/>
<dbReference type="TreeFam" id="TF332130"/>
<dbReference type="Reactome" id="R-GGA-186797">
    <property type="pathway name" value="Signaling by PDGF"/>
</dbReference>
<dbReference type="PRO" id="PR:Q9I946"/>
<dbReference type="Proteomes" id="UP000000539">
    <property type="component" value="Chromosome 4"/>
</dbReference>
<dbReference type="Bgee" id="ENSGALG00000009378">
    <property type="expression patterns" value="Expressed in heart and 10 other cell types or tissues"/>
</dbReference>
<dbReference type="GO" id="GO:0005615">
    <property type="term" value="C:extracellular space"/>
    <property type="evidence" value="ECO:0000318"/>
    <property type="project" value="GO_Central"/>
</dbReference>
<dbReference type="GO" id="GO:0016020">
    <property type="term" value="C:membrane"/>
    <property type="evidence" value="ECO:0007669"/>
    <property type="project" value="InterPro"/>
</dbReference>
<dbReference type="GO" id="GO:0008083">
    <property type="term" value="F:growth factor activity"/>
    <property type="evidence" value="ECO:0007669"/>
    <property type="project" value="UniProtKB-KW"/>
</dbReference>
<dbReference type="GO" id="GO:0005161">
    <property type="term" value="F:platelet-derived growth factor receptor binding"/>
    <property type="evidence" value="ECO:0000318"/>
    <property type="project" value="GO_Central"/>
</dbReference>
<dbReference type="GO" id="GO:0048008">
    <property type="term" value="P:platelet-derived growth factor receptor signaling pathway"/>
    <property type="evidence" value="ECO:0000318"/>
    <property type="project" value="GO_Central"/>
</dbReference>
<dbReference type="GO" id="GO:0051781">
    <property type="term" value="P:positive regulation of cell division"/>
    <property type="evidence" value="ECO:0007669"/>
    <property type="project" value="UniProtKB-KW"/>
</dbReference>
<dbReference type="GO" id="GO:0030335">
    <property type="term" value="P:positive regulation of cell migration"/>
    <property type="evidence" value="ECO:0000318"/>
    <property type="project" value="GO_Central"/>
</dbReference>
<dbReference type="GO" id="GO:0008284">
    <property type="term" value="P:positive regulation of cell population proliferation"/>
    <property type="evidence" value="ECO:0000318"/>
    <property type="project" value="GO_Central"/>
</dbReference>
<dbReference type="GO" id="GO:0070374">
    <property type="term" value="P:positive regulation of ERK1 and ERK2 cascade"/>
    <property type="evidence" value="ECO:0000318"/>
    <property type="project" value="GO_Central"/>
</dbReference>
<dbReference type="GO" id="GO:0051897">
    <property type="term" value="P:positive regulation of phosphatidylinositol 3-kinase/protein kinase B signal transduction"/>
    <property type="evidence" value="ECO:0000318"/>
    <property type="project" value="GO_Central"/>
</dbReference>
<dbReference type="CDD" id="cd00041">
    <property type="entry name" value="CUB"/>
    <property type="match status" value="1"/>
</dbReference>
<dbReference type="CDD" id="cd00135">
    <property type="entry name" value="PDGF"/>
    <property type="match status" value="1"/>
</dbReference>
<dbReference type="FunFam" id="2.10.90.10:FF:000010">
    <property type="entry name" value="Platelet derived growth factor C"/>
    <property type="match status" value="1"/>
</dbReference>
<dbReference type="FunFam" id="2.60.120.290:FF:000017">
    <property type="entry name" value="Platelet derived growth factor C"/>
    <property type="match status" value="1"/>
</dbReference>
<dbReference type="Gene3D" id="2.10.90.10">
    <property type="entry name" value="Cystine-knot cytokines"/>
    <property type="match status" value="1"/>
</dbReference>
<dbReference type="Gene3D" id="2.60.120.290">
    <property type="entry name" value="Spermadhesin, CUB domain"/>
    <property type="match status" value="1"/>
</dbReference>
<dbReference type="InterPro" id="IPR000859">
    <property type="entry name" value="CUB_dom"/>
</dbReference>
<dbReference type="InterPro" id="IPR029034">
    <property type="entry name" value="Cystine-knot_cytokine"/>
</dbReference>
<dbReference type="InterPro" id="IPR000072">
    <property type="entry name" value="PDGF/VEGF_dom"/>
</dbReference>
<dbReference type="InterPro" id="IPR035914">
    <property type="entry name" value="Sperma_CUB_dom_sf"/>
</dbReference>
<dbReference type="PANTHER" id="PTHR11633">
    <property type="entry name" value="PLATELET-DERIVED GROWTH FACTOR"/>
    <property type="match status" value="1"/>
</dbReference>
<dbReference type="PANTHER" id="PTHR11633:SF5">
    <property type="entry name" value="PLATELET-DERIVED GROWTH FACTOR C"/>
    <property type="match status" value="1"/>
</dbReference>
<dbReference type="Pfam" id="PF00431">
    <property type="entry name" value="CUB"/>
    <property type="match status" value="1"/>
</dbReference>
<dbReference type="Pfam" id="PF00341">
    <property type="entry name" value="PDGF"/>
    <property type="match status" value="1"/>
</dbReference>
<dbReference type="SMART" id="SM00042">
    <property type="entry name" value="CUB"/>
    <property type="match status" value="1"/>
</dbReference>
<dbReference type="SUPFAM" id="SSF57501">
    <property type="entry name" value="Cystine-knot cytokines"/>
    <property type="match status" value="1"/>
</dbReference>
<dbReference type="SUPFAM" id="SSF49854">
    <property type="entry name" value="Spermadhesin, CUB domain"/>
    <property type="match status" value="1"/>
</dbReference>
<dbReference type="PROSITE" id="PS01180">
    <property type="entry name" value="CUB"/>
    <property type="match status" value="1"/>
</dbReference>
<dbReference type="PROSITE" id="PS50278">
    <property type="entry name" value="PDGF_2"/>
    <property type="match status" value="1"/>
</dbReference>
<name>PDGFC_CHICK</name>
<keyword id="KW-0165">Cleavage on pair of basic residues</keyword>
<keyword id="KW-0217">Developmental protein</keyword>
<keyword id="KW-1015">Disulfide bond</keyword>
<keyword id="KW-0325">Glycoprotein</keyword>
<keyword id="KW-0339">Growth factor</keyword>
<keyword id="KW-0497">Mitogen</keyword>
<keyword id="KW-1185">Reference proteome</keyword>
<keyword id="KW-0964">Secreted</keyword>
<keyword id="KW-0732">Signal</keyword>
<accession>Q9I946</accession>
<sequence>MLLLGLLLLTSALAGRRHGAAAESDLSSKFSFPGAKEQNGVQDPQHEKIITVTSNGSIHSPKFPHTYPRNTVLVWRLVAVDENVWIQLTFDERFGLEDPEDDICKYDFVEVEEPSDGTVLGRWCGSSSVPSRQISKGNQIRIRFVSDEYFPSQPGFCIHYTLLVPHHTEAPSPSSLPPSALPLDVLNNAVAGFSTVEELIRYLEPDRWQLDLEDLYRPTWQLLGKAYIHGRKSRVVDLNLLKEEVRLYSCTPRNFSVSLREELKRTDTIFWPLCLLVKRCGGNCACCHQNCNECQCIPTKVTKKYHEVLQLKPRSGVRGLHKSLTDVPLEHHEECDCVCKGNSEG</sequence>
<organism>
    <name type="scientific">Gallus gallus</name>
    <name type="common">Chicken</name>
    <dbReference type="NCBI Taxonomy" id="9031"/>
    <lineage>
        <taxon>Eukaryota</taxon>
        <taxon>Metazoa</taxon>
        <taxon>Chordata</taxon>
        <taxon>Craniata</taxon>
        <taxon>Vertebrata</taxon>
        <taxon>Euteleostomi</taxon>
        <taxon>Archelosauria</taxon>
        <taxon>Archosauria</taxon>
        <taxon>Dinosauria</taxon>
        <taxon>Saurischia</taxon>
        <taxon>Theropoda</taxon>
        <taxon>Coelurosauria</taxon>
        <taxon>Aves</taxon>
        <taxon>Neognathae</taxon>
        <taxon>Galloanserae</taxon>
        <taxon>Galliformes</taxon>
        <taxon>Phasianidae</taxon>
        <taxon>Phasianinae</taxon>
        <taxon>Gallus</taxon>
    </lineage>
</organism>
<gene>
    <name type="primary">PDGFC</name>
    <name type="synonym">SCDGF</name>
</gene>
<protein>
    <recommendedName>
        <fullName>Platelet-derived growth factor C</fullName>
        <shortName>PDGF-C</shortName>
    </recommendedName>
    <alternativeName>
        <fullName>Spinal cord-derived growth factor</fullName>
    </alternativeName>
    <component>
        <recommendedName>
            <fullName>Platelet-derived growth factor C, latent form</fullName>
            <shortName>PDGFC latent form</shortName>
        </recommendedName>
    </component>
    <component>
        <recommendedName>
            <fullName>Platelet-derived growth factor C, receptor-binding form</fullName>
            <shortName>PDGFC receptor-binding form</shortName>
        </recommendedName>
    </component>
</protein>
<evidence type="ECO:0000250" key="1"/>
<evidence type="ECO:0000250" key="2">
    <source>
        <dbReference type="UniProtKB" id="Q9NRA1"/>
    </source>
</evidence>
<evidence type="ECO:0000255" key="3"/>
<evidence type="ECO:0000255" key="4">
    <source>
        <dbReference type="PROSITE-ProRule" id="PRU00059"/>
    </source>
</evidence>
<evidence type="ECO:0000269" key="5">
    <source>
    </source>
</evidence>
<evidence type="ECO:0000305" key="6"/>
<feature type="signal peptide" evidence="3">
    <location>
        <begin position="1"/>
        <end position="22"/>
    </location>
</feature>
<feature type="chain" id="PRO_0000343877" description="Platelet-derived growth factor C, latent form">
    <location>
        <begin position="23"/>
        <end position="345"/>
    </location>
</feature>
<feature type="chain" id="PRO_0000343878" description="Platelet-derived growth factor C, receptor-binding form">
    <location>
        <begin status="unknown"/>
        <end position="345"/>
    </location>
</feature>
<feature type="domain" description="CUB" evidence="4">
    <location>
        <begin position="46"/>
        <end position="163"/>
    </location>
</feature>
<feature type="site" description="Cleavage" evidence="6">
    <location>
        <begin position="225"/>
        <end position="226"/>
    </location>
</feature>
<feature type="site" description="Cleavage" evidence="3">
    <location>
        <begin position="231"/>
        <end position="232"/>
    </location>
</feature>
<feature type="site" description="Cleavage" evidence="3">
    <location>
        <begin position="234"/>
        <end position="235"/>
    </location>
</feature>
<feature type="glycosylation site" description="N-linked (GlcNAc...) asparagine" evidence="3">
    <location>
        <position position="55"/>
    </location>
</feature>
<feature type="disulfide bond" evidence="4">
    <location>
        <begin position="104"/>
        <end position="124"/>
    </location>
</feature>
<feature type="disulfide bond" evidence="4">
    <location>
        <begin position="250"/>
        <end position="294"/>
    </location>
</feature>
<feature type="disulfide bond" description="Interchain (with C-286)" evidence="4">
    <location>
        <position position="274"/>
    </location>
</feature>
<feature type="disulfide bond" evidence="4">
    <location>
        <begin position="280"/>
        <end position="335"/>
    </location>
</feature>
<feature type="disulfide bond" description="Interchain (with C-274)" evidence="4">
    <location>
        <position position="286"/>
    </location>
</feature>
<feature type="disulfide bond" evidence="4">
    <location>
        <begin position="287"/>
        <end position="337"/>
    </location>
</feature>
<reference key="1">
    <citation type="journal article" date="2000" name="FEBS Lett.">
        <title>A novel gene derived from developing spinal cords, SCDGF, is a unique member of the PDGF/VEGF family.</title>
        <authorList>
            <person name="Hamada T."/>
            <person name="Ui-Tei K."/>
            <person name="Miyata Y."/>
        </authorList>
    </citation>
    <scope>NUCLEOTIDE SEQUENCE [MRNA]</scope>
    <scope>FUNCTION</scope>
    <scope>DEVELOPMENTAL STAGE</scope>
    <source>
        <strain>White leghorn</strain>
        <tissue>Spinal cord</tissue>
    </source>
</reference>